<organism>
    <name type="scientific">Staphylococcus aureus (strain COL)</name>
    <dbReference type="NCBI Taxonomy" id="93062"/>
    <lineage>
        <taxon>Bacteria</taxon>
        <taxon>Bacillati</taxon>
        <taxon>Bacillota</taxon>
        <taxon>Bacilli</taxon>
        <taxon>Bacillales</taxon>
        <taxon>Staphylococcaceae</taxon>
        <taxon>Staphylococcus</taxon>
    </lineage>
</organism>
<comment type="catalytic activity">
    <reaction evidence="1">
        <text>L-citrulline + L-aspartate + ATP = 2-(N(omega)-L-arginino)succinate + AMP + diphosphate + H(+)</text>
        <dbReference type="Rhea" id="RHEA:10932"/>
        <dbReference type="ChEBI" id="CHEBI:15378"/>
        <dbReference type="ChEBI" id="CHEBI:29991"/>
        <dbReference type="ChEBI" id="CHEBI:30616"/>
        <dbReference type="ChEBI" id="CHEBI:33019"/>
        <dbReference type="ChEBI" id="CHEBI:57472"/>
        <dbReference type="ChEBI" id="CHEBI:57743"/>
        <dbReference type="ChEBI" id="CHEBI:456215"/>
        <dbReference type="EC" id="6.3.4.5"/>
    </reaction>
</comment>
<comment type="pathway">
    <text evidence="1">Amino-acid biosynthesis; L-arginine biosynthesis; L-arginine from L-ornithine and carbamoyl phosphate: step 2/3.</text>
</comment>
<comment type="subunit">
    <text evidence="1">Homotetramer.</text>
</comment>
<comment type="subcellular location">
    <subcellularLocation>
        <location evidence="1">Cytoplasm</location>
    </subcellularLocation>
</comment>
<comment type="similarity">
    <text evidence="1">Belongs to the argininosuccinate synthase family. Type 1 subfamily.</text>
</comment>
<dbReference type="EC" id="6.3.4.5" evidence="1"/>
<dbReference type="EMBL" id="CP000046">
    <property type="protein sequence ID" value="AAW37932.1"/>
    <property type="molecule type" value="Genomic_DNA"/>
</dbReference>
<dbReference type="RefSeq" id="WP_000660045.1">
    <property type="nucleotide sequence ID" value="NZ_JBGOFO010000002.1"/>
</dbReference>
<dbReference type="SMR" id="Q5HHC4"/>
<dbReference type="KEGG" id="sac:SACOL0964"/>
<dbReference type="HOGENOM" id="CLU_032784_4_2_9"/>
<dbReference type="UniPathway" id="UPA00068">
    <property type="reaction ID" value="UER00113"/>
</dbReference>
<dbReference type="Proteomes" id="UP000000530">
    <property type="component" value="Chromosome"/>
</dbReference>
<dbReference type="GO" id="GO:0005737">
    <property type="term" value="C:cytoplasm"/>
    <property type="evidence" value="ECO:0007669"/>
    <property type="project" value="UniProtKB-SubCell"/>
</dbReference>
<dbReference type="GO" id="GO:0004055">
    <property type="term" value="F:argininosuccinate synthase activity"/>
    <property type="evidence" value="ECO:0007669"/>
    <property type="project" value="UniProtKB-UniRule"/>
</dbReference>
<dbReference type="GO" id="GO:0005524">
    <property type="term" value="F:ATP binding"/>
    <property type="evidence" value="ECO:0007669"/>
    <property type="project" value="UniProtKB-UniRule"/>
</dbReference>
<dbReference type="GO" id="GO:0000053">
    <property type="term" value="P:argininosuccinate metabolic process"/>
    <property type="evidence" value="ECO:0007669"/>
    <property type="project" value="TreeGrafter"/>
</dbReference>
<dbReference type="GO" id="GO:0006526">
    <property type="term" value="P:L-arginine biosynthetic process"/>
    <property type="evidence" value="ECO:0007669"/>
    <property type="project" value="UniProtKB-UniRule"/>
</dbReference>
<dbReference type="GO" id="GO:0000050">
    <property type="term" value="P:urea cycle"/>
    <property type="evidence" value="ECO:0007669"/>
    <property type="project" value="TreeGrafter"/>
</dbReference>
<dbReference type="CDD" id="cd01999">
    <property type="entry name" value="ASS"/>
    <property type="match status" value="1"/>
</dbReference>
<dbReference type="FunFam" id="1.20.5.470:FF:000002">
    <property type="entry name" value="Argininosuccinate synthase"/>
    <property type="match status" value="1"/>
</dbReference>
<dbReference type="FunFam" id="3.40.50.620:FF:000038">
    <property type="entry name" value="Argininosuccinate synthase"/>
    <property type="match status" value="1"/>
</dbReference>
<dbReference type="FunFam" id="3.90.1260.10:FF:000007">
    <property type="entry name" value="Argininosuccinate synthase"/>
    <property type="match status" value="1"/>
</dbReference>
<dbReference type="Gene3D" id="3.90.1260.10">
    <property type="entry name" value="Argininosuccinate synthetase, chain A, domain 2"/>
    <property type="match status" value="1"/>
</dbReference>
<dbReference type="Gene3D" id="3.40.50.620">
    <property type="entry name" value="HUPs"/>
    <property type="match status" value="1"/>
</dbReference>
<dbReference type="Gene3D" id="1.20.5.470">
    <property type="entry name" value="Single helix bin"/>
    <property type="match status" value="1"/>
</dbReference>
<dbReference type="HAMAP" id="MF_00005">
    <property type="entry name" value="Arg_succ_synth_type1"/>
    <property type="match status" value="1"/>
</dbReference>
<dbReference type="InterPro" id="IPR048268">
    <property type="entry name" value="Arginosuc_syn_C"/>
</dbReference>
<dbReference type="InterPro" id="IPR048267">
    <property type="entry name" value="Arginosuc_syn_N"/>
</dbReference>
<dbReference type="InterPro" id="IPR001518">
    <property type="entry name" value="Arginosuc_synth"/>
</dbReference>
<dbReference type="InterPro" id="IPR018223">
    <property type="entry name" value="Arginosuc_synth_CS"/>
</dbReference>
<dbReference type="InterPro" id="IPR023434">
    <property type="entry name" value="Arginosuc_synth_type_1_subfam"/>
</dbReference>
<dbReference type="InterPro" id="IPR024074">
    <property type="entry name" value="AS_cat/multimer_dom_body"/>
</dbReference>
<dbReference type="InterPro" id="IPR014729">
    <property type="entry name" value="Rossmann-like_a/b/a_fold"/>
</dbReference>
<dbReference type="NCBIfam" id="TIGR00032">
    <property type="entry name" value="argG"/>
    <property type="match status" value="1"/>
</dbReference>
<dbReference type="NCBIfam" id="NF001770">
    <property type="entry name" value="PRK00509.1"/>
    <property type="match status" value="1"/>
</dbReference>
<dbReference type="PANTHER" id="PTHR11587">
    <property type="entry name" value="ARGININOSUCCINATE SYNTHASE"/>
    <property type="match status" value="1"/>
</dbReference>
<dbReference type="PANTHER" id="PTHR11587:SF2">
    <property type="entry name" value="ARGININOSUCCINATE SYNTHASE"/>
    <property type="match status" value="1"/>
</dbReference>
<dbReference type="Pfam" id="PF20979">
    <property type="entry name" value="Arginosuc_syn_C"/>
    <property type="match status" value="1"/>
</dbReference>
<dbReference type="Pfam" id="PF00764">
    <property type="entry name" value="Arginosuc_synth"/>
    <property type="match status" value="1"/>
</dbReference>
<dbReference type="SUPFAM" id="SSF52402">
    <property type="entry name" value="Adenine nucleotide alpha hydrolases-like"/>
    <property type="match status" value="1"/>
</dbReference>
<dbReference type="SUPFAM" id="SSF69864">
    <property type="entry name" value="Argininosuccinate synthetase, C-terminal domain"/>
    <property type="match status" value="1"/>
</dbReference>
<dbReference type="PROSITE" id="PS00564">
    <property type="entry name" value="ARGININOSUCCIN_SYN_1"/>
    <property type="match status" value="1"/>
</dbReference>
<dbReference type="PROSITE" id="PS00565">
    <property type="entry name" value="ARGININOSUCCIN_SYN_2"/>
    <property type="match status" value="1"/>
</dbReference>
<proteinExistence type="inferred from homology"/>
<name>ASSY_STAAC</name>
<gene>
    <name evidence="1" type="primary">argG</name>
    <name type="ordered locus">SACOL0964</name>
</gene>
<sequence length="401" mass="44455">MKEKIVLAYSGGLDTSVAVQWLIDKGYDVVACCLDVGEGKDLDIVYKKALDMGAVECHIIDATKEFSDEYVSYAIKGNLMYENAYPLVSALSRPLIAKKLVEIAEKTNSVGIAHGCTGKGNDQVRFEVAIKALNPSLKAFAPVREWAWSREEEIDYAIKHNIPVSINHDSPYSIDQNLWGRANECGILEDPYAAPPEDAFDLTNALEETPDTADEIILTFDKGIPVQIDGKTYELDDLILTLNALAGKHGIGRIDHVENRLVGIKSREIYEAPAAEVILKAHKALETITLTKDVAHFKPIIEKQFAEQLYNGLWFSPLTDSLKLFIDSTQQYVSGDVRIKLFKGNAIVNGRKSPYTLYDEKLATYTKEDAFNQDAAVGFIDIYGLPTQVNAMLHGGYSNEQ</sequence>
<keyword id="KW-0028">Amino-acid biosynthesis</keyword>
<keyword id="KW-0055">Arginine biosynthesis</keyword>
<keyword id="KW-0067">ATP-binding</keyword>
<keyword id="KW-0963">Cytoplasm</keyword>
<keyword id="KW-0436">Ligase</keyword>
<keyword id="KW-0547">Nucleotide-binding</keyword>
<evidence type="ECO:0000255" key="1">
    <source>
        <dbReference type="HAMAP-Rule" id="MF_00005"/>
    </source>
</evidence>
<feature type="chain" id="PRO_0000148635" description="Argininosuccinate synthase">
    <location>
        <begin position="1"/>
        <end position="401"/>
    </location>
</feature>
<feature type="binding site" evidence="1">
    <location>
        <begin position="8"/>
        <end position="16"/>
    </location>
    <ligand>
        <name>ATP</name>
        <dbReference type="ChEBI" id="CHEBI:30616"/>
    </ligand>
</feature>
<feature type="binding site" evidence="1">
    <location>
        <position position="85"/>
    </location>
    <ligand>
        <name>L-citrulline</name>
        <dbReference type="ChEBI" id="CHEBI:57743"/>
    </ligand>
</feature>
<feature type="binding site" evidence="1">
    <location>
        <position position="115"/>
    </location>
    <ligand>
        <name>ATP</name>
        <dbReference type="ChEBI" id="CHEBI:30616"/>
    </ligand>
</feature>
<feature type="binding site" evidence="1">
    <location>
        <position position="117"/>
    </location>
    <ligand>
        <name>L-aspartate</name>
        <dbReference type="ChEBI" id="CHEBI:29991"/>
    </ligand>
</feature>
<feature type="binding site" evidence="1">
    <location>
        <position position="121"/>
    </location>
    <ligand>
        <name>L-aspartate</name>
        <dbReference type="ChEBI" id="CHEBI:29991"/>
    </ligand>
</feature>
<feature type="binding site" evidence="1">
    <location>
        <position position="121"/>
    </location>
    <ligand>
        <name>L-citrulline</name>
        <dbReference type="ChEBI" id="CHEBI:57743"/>
    </ligand>
</feature>
<feature type="binding site" evidence="1">
    <location>
        <position position="122"/>
    </location>
    <ligand>
        <name>L-aspartate</name>
        <dbReference type="ChEBI" id="CHEBI:29991"/>
    </ligand>
</feature>
<feature type="binding site" evidence="1">
    <location>
        <position position="125"/>
    </location>
    <ligand>
        <name>L-citrulline</name>
        <dbReference type="ChEBI" id="CHEBI:57743"/>
    </ligand>
</feature>
<feature type="binding site" evidence="1">
    <location>
        <position position="173"/>
    </location>
    <ligand>
        <name>L-citrulline</name>
        <dbReference type="ChEBI" id="CHEBI:57743"/>
    </ligand>
</feature>
<feature type="binding site" evidence="1">
    <location>
        <position position="258"/>
    </location>
    <ligand>
        <name>L-citrulline</name>
        <dbReference type="ChEBI" id="CHEBI:57743"/>
    </ligand>
</feature>
<feature type="binding site" evidence="1">
    <location>
        <position position="270"/>
    </location>
    <ligand>
        <name>L-citrulline</name>
        <dbReference type="ChEBI" id="CHEBI:57743"/>
    </ligand>
</feature>
<accession>Q5HHC4</accession>
<protein>
    <recommendedName>
        <fullName evidence="1">Argininosuccinate synthase</fullName>
        <ecNumber evidence="1">6.3.4.5</ecNumber>
    </recommendedName>
    <alternativeName>
        <fullName evidence="1">Citrulline--aspartate ligase</fullName>
    </alternativeName>
</protein>
<reference key="1">
    <citation type="journal article" date="2005" name="J. Bacteriol.">
        <title>Insights on evolution of virulence and resistance from the complete genome analysis of an early methicillin-resistant Staphylococcus aureus strain and a biofilm-producing methicillin-resistant Staphylococcus epidermidis strain.</title>
        <authorList>
            <person name="Gill S.R."/>
            <person name="Fouts D.E."/>
            <person name="Archer G.L."/>
            <person name="Mongodin E.F."/>
            <person name="DeBoy R.T."/>
            <person name="Ravel J."/>
            <person name="Paulsen I.T."/>
            <person name="Kolonay J.F."/>
            <person name="Brinkac L.M."/>
            <person name="Beanan M.J."/>
            <person name="Dodson R.J."/>
            <person name="Daugherty S.C."/>
            <person name="Madupu R."/>
            <person name="Angiuoli S.V."/>
            <person name="Durkin A.S."/>
            <person name="Haft D.H."/>
            <person name="Vamathevan J.J."/>
            <person name="Khouri H."/>
            <person name="Utterback T.R."/>
            <person name="Lee C."/>
            <person name="Dimitrov G."/>
            <person name="Jiang L."/>
            <person name="Qin H."/>
            <person name="Weidman J."/>
            <person name="Tran K."/>
            <person name="Kang K.H."/>
            <person name="Hance I.R."/>
            <person name="Nelson K.E."/>
            <person name="Fraser C.M."/>
        </authorList>
    </citation>
    <scope>NUCLEOTIDE SEQUENCE [LARGE SCALE GENOMIC DNA]</scope>
    <source>
        <strain>COL</strain>
    </source>
</reference>